<protein>
    <recommendedName>
        <fullName>Chitinase 1</fullName>
        <ecNumber>3.2.1.14</ecNumber>
    </recommendedName>
</protein>
<evidence type="ECO:0000255" key="1"/>
<evidence type="ECO:0000255" key="2">
    <source>
        <dbReference type="PROSITE-ProRule" id="PRU01258"/>
    </source>
</evidence>
<evidence type="ECO:0000305" key="3"/>
<feature type="signal peptide" evidence="1">
    <location>
        <begin position="1"/>
        <end position="22"/>
    </location>
</feature>
<feature type="propeptide" id="PRO_0000011922" evidence="1">
    <location>
        <begin position="23"/>
        <end position="34"/>
    </location>
</feature>
<feature type="chain" id="PRO_0000011923" description="Chitinase 1">
    <location>
        <begin position="35"/>
        <end position="423"/>
    </location>
</feature>
<feature type="domain" description="GH18" evidence="2">
    <location>
        <begin position="38"/>
        <end position="401"/>
    </location>
</feature>
<feature type="active site" description="Proton donor" evidence="2">
    <location>
        <position position="171"/>
    </location>
</feature>
<feature type="binding site" evidence="2">
    <location>
        <begin position="102"/>
        <end position="103"/>
    </location>
    <ligand>
        <name>chitin</name>
        <dbReference type="ChEBI" id="CHEBI:17029"/>
    </ligand>
</feature>
<feature type="binding site" evidence="2">
    <location>
        <begin position="129"/>
        <end position="132"/>
    </location>
    <ligand>
        <name>chitin</name>
        <dbReference type="ChEBI" id="CHEBI:17029"/>
    </ligand>
</feature>
<feature type="binding site" evidence="2">
    <location>
        <position position="172"/>
    </location>
    <ligand>
        <name>chitin</name>
        <dbReference type="ChEBI" id="CHEBI:17029"/>
    </ligand>
</feature>
<feature type="binding site" evidence="2">
    <location>
        <begin position="237"/>
        <end position="240"/>
    </location>
    <ligand>
        <name>chitin</name>
        <dbReference type="ChEBI" id="CHEBI:17029"/>
    </ligand>
</feature>
<feature type="binding site" evidence="2">
    <location>
        <position position="378"/>
    </location>
    <ligand>
        <name>chitin</name>
        <dbReference type="ChEBI" id="CHEBI:17029"/>
    </ligand>
</feature>
<dbReference type="EC" id="3.2.1.14"/>
<dbReference type="EMBL" id="X64104">
    <property type="protein sequence ID" value="CAA45468.1"/>
    <property type="molecule type" value="Genomic_DNA"/>
</dbReference>
<dbReference type="EMBL" id="S81303">
    <property type="protein sequence ID" value="AAB21333.1"/>
    <property type="molecule type" value="Genomic_DNA"/>
</dbReference>
<dbReference type="PIR" id="JQ1975">
    <property type="entry name" value="JQ1975"/>
</dbReference>
<dbReference type="PIR" id="S26859">
    <property type="entry name" value="S26859"/>
</dbReference>
<dbReference type="SMR" id="P32470"/>
<dbReference type="CAZy" id="GH18">
    <property type="family name" value="Glycoside Hydrolase Family 18"/>
</dbReference>
<dbReference type="GO" id="GO:0005576">
    <property type="term" value="C:extracellular region"/>
    <property type="evidence" value="ECO:0007669"/>
    <property type="project" value="UniProtKB-SubCell"/>
</dbReference>
<dbReference type="GO" id="GO:0008061">
    <property type="term" value="F:chitin binding"/>
    <property type="evidence" value="ECO:0007669"/>
    <property type="project" value="InterPro"/>
</dbReference>
<dbReference type="GO" id="GO:0008843">
    <property type="term" value="F:endochitinase activity"/>
    <property type="evidence" value="ECO:0007669"/>
    <property type="project" value="UniProtKB-EC"/>
</dbReference>
<dbReference type="GO" id="GO:0006032">
    <property type="term" value="P:chitin catabolic process"/>
    <property type="evidence" value="ECO:0007669"/>
    <property type="project" value="UniProtKB-KW"/>
</dbReference>
<dbReference type="GO" id="GO:0000272">
    <property type="term" value="P:polysaccharide catabolic process"/>
    <property type="evidence" value="ECO:0007669"/>
    <property type="project" value="UniProtKB-KW"/>
</dbReference>
<dbReference type="CDD" id="cd06548">
    <property type="entry name" value="GH18_chitinase"/>
    <property type="match status" value="1"/>
</dbReference>
<dbReference type="FunFam" id="3.10.50.10:FF:000005">
    <property type="entry name" value="Endochitinase B1"/>
    <property type="match status" value="1"/>
</dbReference>
<dbReference type="FunFam" id="3.20.20.80:FF:000075">
    <property type="entry name" value="Sporulation-specific chitinase"/>
    <property type="match status" value="1"/>
</dbReference>
<dbReference type="Gene3D" id="3.10.50.10">
    <property type="match status" value="1"/>
</dbReference>
<dbReference type="Gene3D" id="3.20.20.80">
    <property type="entry name" value="Glycosidases"/>
    <property type="match status" value="1"/>
</dbReference>
<dbReference type="InterPro" id="IPR011583">
    <property type="entry name" value="Chitinase_II/V-like_cat"/>
</dbReference>
<dbReference type="InterPro" id="IPR029070">
    <property type="entry name" value="Chitinase_insertion_sf"/>
</dbReference>
<dbReference type="InterPro" id="IPR001223">
    <property type="entry name" value="Glyco_hydro18_cat"/>
</dbReference>
<dbReference type="InterPro" id="IPR001579">
    <property type="entry name" value="Glyco_hydro_18_chit_AS"/>
</dbReference>
<dbReference type="InterPro" id="IPR017853">
    <property type="entry name" value="Glycoside_hydrolase_SF"/>
</dbReference>
<dbReference type="InterPro" id="IPR050314">
    <property type="entry name" value="Glycosyl_Hydrlase_18"/>
</dbReference>
<dbReference type="PANTHER" id="PTHR11177">
    <property type="entry name" value="CHITINASE"/>
    <property type="match status" value="1"/>
</dbReference>
<dbReference type="PANTHER" id="PTHR11177:SF365">
    <property type="entry name" value="ENDOCHITINASE B"/>
    <property type="match status" value="1"/>
</dbReference>
<dbReference type="Pfam" id="PF00704">
    <property type="entry name" value="Glyco_hydro_18"/>
    <property type="match status" value="1"/>
</dbReference>
<dbReference type="SMART" id="SM00636">
    <property type="entry name" value="Glyco_18"/>
    <property type="match status" value="1"/>
</dbReference>
<dbReference type="SUPFAM" id="SSF51445">
    <property type="entry name" value="(Trans)glycosidases"/>
    <property type="match status" value="1"/>
</dbReference>
<dbReference type="SUPFAM" id="SSF54556">
    <property type="entry name" value="Chitinase insertion domain"/>
    <property type="match status" value="1"/>
</dbReference>
<dbReference type="PROSITE" id="PS01095">
    <property type="entry name" value="GH18_1"/>
    <property type="match status" value="1"/>
</dbReference>
<dbReference type="PROSITE" id="PS51910">
    <property type="entry name" value="GH18_2"/>
    <property type="match status" value="1"/>
</dbReference>
<reference key="1">
    <citation type="journal article" date="1992" name="Gene">
        <title>Primary structure of a chitinase-encoding gene (chi1) from the filamentous fungus Aphanocladium album: similarity to bacterial chitinases.</title>
        <authorList>
            <person name="Blaiseau P.-L."/>
            <person name="Lafay J.-F."/>
        </authorList>
    </citation>
    <scope>NUCLEOTIDE SEQUENCE [GENOMIC DNA]</scope>
    <source>
        <strain>ETHM 483</strain>
    </source>
</reference>
<reference key="2">
    <citation type="journal article" date="1992" name="Curr. Genet.">
        <title>Cloning and expression of a chitinase gene from the hyperparasitic fungus Aphanocladium album.</title>
        <authorList>
            <person name="Blaiseau P.-L."/>
            <person name="Kunz C."/>
            <person name="Grison R."/>
            <person name="Bertheau Y."/>
            <person name="Brygoo Y."/>
        </authorList>
    </citation>
    <scope>NUCLEOTIDE SEQUENCE [GENOMIC DNA] OF 35-67</scope>
    <scope>PROTEIN SEQUENCE OF 35-67</scope>
</reference>
<gene>
    <name type="primary">CHI1</name>
</gene>
<sequence>MLSFVKKSIALVAALQAVTALATPISSEAGVEKRGSGFANAVYFTNWGIYGRNFQPADLPASEITHVLYSFMNVRADGTIFSGDTYADYEKHYAGDSWNDVGTNAYGCVKQLYLLKKQNRNMKVMLSIGGWTWSTNFPAAASSAATRKTFAQSAVGFMKDWGFDGIDIDWEYPADATQAQNMVLLLQAVRSELDSYAAQYAKGHHFLLSIAAPAGPDNYNKLKFAELGKVLDYINLMAYDYAGSWSNYTGHDANIYANPQNPNATPYNTDDAVQAYINGGVPANKIVLGMPIYGRSFQQTEGIGKPYNGIGSGSWENGIWDYKALPKAGATVKCDDTAKGCYSYDPSTKELISFDTPAMISTKVSWLKGKGLGGTMFWEASASKKGSDSLISTSHQGLGSQDSTQNYLDYPNSKYDNIKKGMN</sequence>
<keyword id="KW-0119">Carbohydrate metabolism</keyword>
<keyword id="KW-0146">Chitin degradation</keyword>
<keyword id="KW-0165">Cleavage on pair of basic residues</keyword>
<keyword id="KW-0903">Direct protein sequencing</keyword>
<keyword id="KW-0326">Glycosidase</keyword>
<keyword id="KW-0378">Hydrolase</keyword>
<keyword id="KW-0624">Polysaccharide degradation</keyword>
<keyword id="KW-0964">Secreted</keyword>
<keyword id="KW-0732">Signal</keyword>
<keyword id="KW-0865">Zymogen</keyword>
<organism>
    <name type="scientific">Aphanocladium album</name>
    <name type="common">Wheat rust fungus</name>
    <name type="synonym">Acremonium album</name>
    <dbReference type="NCBI Taxonomy" id="12942"/>
    <lineage>
        <taxon>Eukaryota</taxon>
        <taxon>Fungi</taxon>
        <taxon>Dikarya</taxon>
        <taxon>Ascomycota</taxon>
        <taxon>Pezizomycotina</taxon>
        <taxon>Sordariomycetes</taxon>
        <taxon>Hypocreomycetidae</taxon>
        <taxon>Hypocreales</taxon>
        <taxon>Hypocreales incertae sedis</taxon>
        <taxon>Aphanocladium</taxon>
    </lineage>
</organism>
<comment type="catalytic activity">
    <reaction>
        <text>Random endo-hydrolysis of N-acetyl-beta-D-glucosaminide (1-&gt;4)-beta-linkages in chitin and chitodextrins.</text>
        <dbReference type="EC" id="3.2.1.14"/>
    </reaction>
</comment>
<comment type="subcellular location">
    <subcellularLocation>
        <location>Secreted</location>
    </subcellularLocation>
</comment>
<comment type="similarity">
    <text evidence="3">Belongs to the glycosyl hydrolase 18 family. Chitinase class V subfamily.</text>
</comment>
<accession>P32470</accession>
<proteinExistence type="evidence at protein level"/>
<name>CHI1_APHAL</name>